<proteinExistence type="inferred from homology"/>
<sequence>MDREIRILHTADTHLGYRQYHSEVRRQDFFKAFETVIKDAVDMQVDAVVHAGDLFDSRNPTLEDLLETMNVLSRLKVANIPFFGIVGNHESKQSTQWLDLFEEMGLAGRLGKAPKMVGDVAIYGIDSVPKSKIPLFDYSGFEIPESLPENCRKLLVMHQIMQPSPFPDWDCAEVIENLPFKADAVLLGDYHEYEKIKVGESWVTYSGSTERNSASEKEPRSYSIITLSGEGLEISRRTIPTRNFLFITAKVDGEEKPFEQIFSTVNEHLEEIPESVVFLDVSGDSSSVLSFSEIEEYLLSKGALVVKVKDARVKEGIPEEVIKVAFHDPDRAVAEELRRMSLNDGGLIVDEVIRSPDVPRSRVDEETENRLLGLIEAIDFKDPDFMIKIPVSHVSPVDPSSSVSSIESSGSVSPIDSVSTVSPSSPSSSAIIKEPEELKPPGAAEEIENPKPAGVTEFTAAVAAKSETLMPPVRIQRSESLNESLNKIFEKHDVVPESPETAGSIAGSVETAVEDEISKVTPDSGVITAPQSSSPVSFSDNSQTGFSAISPPESIPSPEILKENSEADADEKPVDGKLSEEKPVGVPDKATKTVKQSHRKGKEKSAVPRQYNLGDYL</sequence>
<gene>
    <name evidence="1" type="primary">mre11</name>
    <name type="ordered locus">MM_2193</name>
</gene>
<name>MRE11_METMA</name>
<accession>Q8PUY5</accession>
<feature type="chain" id="PRO_0000138691" description="DNA double-strand break repair protein Mre11">
    <location>
        <begin position="1"/>
        <end position="617"/>
    </location>
</feature>
<feature type="region of interest" description="Disordered" evidence="2">
    <location>
        <begin position="395"/>
        <end position="437"/>
    </location>
</feature>
<feature type="region of interest" description="Disordered" evidence="2">
    <location>
        <begin position="513"/>
        <end position="617"/>
    </location>
</feature>
<feature type="compositionally biased region" description="Low complexity" evidence="2">
    <location>
        <begin position="395"/>
        <end position="432"/>
    </location>
</feature>
<feature type="compositionally biased region" description="Polar residues" evidence="2">
    <location>
        <begin position="529"/>
        <end position="547"/>
    </location>
</feature>
<feature type="compositionally biased region" description="Low complexity" evidence="2">
    <location>
        <begin position="549"/>
        <end position="559"/>
    </location>
</feature>
<feature type="compositionally biased region" description="Basic and acidic residues" evidence="2">
    <location>
        <begin position="560"/>
        <end position="583"/>
    </location>
</feature>
<feature type="active site" description="Proton donor" evidence="1">
    <location>
        <position position="89"/>
    </location>
</feature>
<feature type="binding site" evidence="1">
    <location>
        <position position="12"/>
    </location>
    <ligand>
        <name>Mn(2+)</name>
        <dbReference type="ChEBI" id="CHEBI:29035"/>
        <label>1</label>
    </ligand>
</feature>
<feature type="binding site" evidence="1">
    <location>
        <position position="14"/>
    </location>
    <ligand>
        <name>Mn(2+)</name>
        <dbReference type="ChEBI" id="CHEBI:29035"/>
        <label>1</label>
    </ligand>
</feature>
<feature type="binding site" evidence="1">
    <location>
        <position position="53"/>
    </location>
    <ligand>
        <name>Mn(2+)</name>
        <dbReference type="ChEBI" id="CHEBI:29035"/>
        <label>1</label>
    </ligand>
</feature>
<feature type="binding site" evidence="1">
    <location>
        <position position="53"/>
    </location>
    <ligand>
        <name>Mn(2+)</name>
        <dbReference type="ChEBI" id="CHEBI:29035"/>
        <label>2</label>
    </ligand>
</feature>
<feature type="binding site" evidence="1">
    <location>
        <position position="88"/>
    </location>
    <ligand>
        <name>Mn(2+)</name>
        <dbReference type="ChEBI" id="CHEBI:29035"/>
        <label>2</label>
    </ligand>
</feature>
<feature type="binding site" evidence="1">
    <location>
        <position position="158"/>
    </location>
    <ligand>
        <name>Mn(2+)</name>
        <dbReference type="ChEBI" id="CHEBI:29035"/>
        <label>2</label>
    </ligand>
</feature>
<feature type="binding site" evidence="1">
    <location>
        <position position="189"/>
    </location>
    <ligand>
        <name>Mn(2+)</name>
        <dbReference type="ChEBI" id="CHEBI:29035"/>
        <label>2</label>
    </ligand>
</feature>
<feature type="binding site" evidence="1">
    <location>
        <position position="191"/>
    </location>
    <ligand>
        <name>Mn(2+)</name>
        <dbReference type="ChEBI" id="CHEBI:29035"/>
        <label>1</label>
    </ligand>
</feature>
<dbReference type="EC" id="3.1.-.-" evidence="1"/>
<dbReference type="EMBL" id="AE008384">
    <property type="protein sequence ID" value="AAM31889.1"/>
    <property type="molecule type" value="Genomic_DNA"/>
</dbReference>
<dbReference type="RefSeq" id="WP_011034124.1">
    <property type="nucleotide sequence ID" value="NC_003901.1"/>
</dbReference>
<dbReference type="SMR" id="Q8PUY5"/>
<dbReference type="GeneID" id="1480535"/>
<dbReference type="KEGG" id="mma:MM_2193"/>
<dbReference type="PATRIC" id="fig|192952.21.peg.2511"/>
<dbReference type="eggNOG" id="arCOG00397">
    <property type="taxonomic scope" value="Archaea"/>
</dbReference>
<dbReference type="HOGENOM" id="CLU_026621_3_1_2"/>
<dbReference type="Proteomes" id="UP000000595">
    <property type="component" value="Chromosome"/>
</dbReference>
<dbReference type="GO" id="GO:0008408">
    <property type="term" value="F:3'-5' exonuclease activity"/>
    <property type="evidence" value="ECO:0007669"/>
    <property type="project" value="UniProtKB-UniRule"/>
</dbReference>
<dbReference type="GO" id="GO:0045027">
    <property type="term" value="F:DNA end binding"/>
    <property type="evidence" value="ECO:0007669"/>
    <property type="project" value="UniProtKB-UniRule"/>
</dbReference>
<dbReference type="GO" id="GO:0004519">
    <property type="term" value="F:endonuclease activity"/>
    <property type="evidence" value="ECO:0007669"/>
    <property type="project" value="UniProtKB-UniRule"/>
</dbReference>
<dbReference type="GO" id="GO:0030145">
    <property type="term" value="F:manganese ion binding"/>
    <property type="evidence" value="ECO:0007669"/>
    <property type="project" value="UniProtKB-UniRule"/>
</dbReference>
<dbReference type="GO" id="GO:0000403">
    <property type="term" value="F:Y-form DNA binding"/>
    <property type="evidence" value="ECO:0007669"/>
    <property type="project" value="UniProtKB-UniRule"/>
</dbReference>
<dbReference type="GO" id="GO:0006302">
    <property type="term" value="P:double-strand break repair"/>
    <property type="evidence" value="ECO:0007669"/>
    <property type="project" value="UniProtKB-UniRule"/>
</dbReference>
<dbReference type="CDD" id="cd00840">
    <property type="entry name" value="MPP_Mre11_N"/>
    <property type="match status" value="1"/>
</dbReference>
<dbReference type="Gene3D" id="3.60.21.10">
    <property type="match status" value="1"/>
</dbReference>
<dbReference type="HAMAP" id="MF_02044">
    <property type="entry name" value="Mre11"/>
    <property type="match status" value="1"/>
</dbReference>
<dbReference type="InterPro" id="IPR004843">
    <property type="entry name" value="Calcineurin-like_PHP_ApaH"/>
</dbReference>
<dbReference type="InterPro" id="IPR050535">
    <property type="entry name" value="DNA_Repair-Maintenance_Comp"/>
</dbReference>
<dbReference type="InterPro" id="IPR029052">
    <property type="entry name" value="Metallo-depent_PP-like"/>
</dbReference>
<dbReference type="InterPro" id="IPR032885">
    <property type="entry name" value="Mre11_archaea-type"/>
</dbReference>
<dbReference type="InterPro" id="IPR041796">
    <property type="entry name" value="Mre11_N"/>
</dbReference>
<dbReference type="PANTHER" id="PTHR30337">
    <property type="entry name" value="COMPONENT OF ATP-DEPENDENT DSDNA EXONUCLEASE"/>
    <property type="match status" value="1"/>
</dbReference>
<dbReference type="PANTHER" id="PTHR30337:SF0">
    <property type="entry name" value="NUCLEASE SBCCD SUBUNIT D"/>
    <property type="match status" value="1"/>
</dbReference>
<dbReference type="Pfam" id="PF00149">
    <property type="entry name" value="Metallophos"/>
    <property type="match status" value="1"/>
</dbReference>
<dbReference type="SUPFAM" id="SSF56300">
    <property type="entry name" value="Metallo-dependent phosphatases"/>
    <property type="match status" value="1"/>
</dbReference>
<reference key="1">
    <citation type="journal article" date="2002" name="J. Mol. Microbiol. Biotechnol.">
        <title>The genome of Methanosarcina mazei: evidence for lateral gene transfer between Bacteria and Archaea.</title>
        <authorList>
            <person name="Deppenmeier U."/>
            <person name="Johann A."/>
            <person name="Hartsch T."/>
            <person name="Merkl R."/>
            <person name="Schmitz R.A."/>
            <person name="Martinez-Arias R."/>
            <person name="Henne A."/>
            <person name="Wiezer A."/>
            <person name="Baeumer S."/>
            <person name="Jacobi C."/>
            <person name="Brueggemann H."/>
            <person name="Lienard T."/>
            <person name="Christmann A."/>
            <person name="Boemecke M."/>
            <person name="Steckel S."/>
            <person name="Bhattacharyya A."/>
            <person name="Lykidis A."/>
            <person name="Overbeek R."/>
            <person name="Klenk H.-P."/>
            <person name="Gunsalus R.P."/>
            <person name="Fritz H.-J."/>
            <person name="Gottschalk G."/>
        </authorList>
    </citation>
    <scope>NUCLEOTIDE SEQUENCE [LARGE SCALE GENOMIC DNA]</scope>
    <source>
        <strain>ATCC BAA-159 / DSM 3647 / Goe1 / Go1 / JCM 11833 / OCM 88</strain>
    </source>
</reference>
<evidence type="ECO:0000255" key="1">
    <source>
        <dbReference type="HAMAP-Rule" id="MF_02044"/>
    </source>
</evidence>
<evidence type="ECO:0000256" key="2">
    <source>
        <dbReference type="SAM" id="MobiDB-lite"/>
    </source>
</evidence>
<comment type="function">
    <text evidence="1">Part of the Rad50/Mre11 complex, which is involved in the early steps of DNA double-strand break (DSB) repair. The complex may facilitate opening of the processed DNA ends to aid in the recruitment of HerA and NurA. Mre11 binds to DSB ends and has both double-stranded 3'-5' exonuclease activity and single-stranded endonuclease activity.</text>
</comment>
<comment type="cofactor">
    <cofactor evidence="1">
        <name>Mn(2+)</name>
        <dbReference type="ChEBI" id="CHEBI:29035"/>
    </cofactor>
    <text evidence="1">Binds 2 manganese ions per subunit.</text>
</comment>
<comment type="activity regulation">
    <text evidence="1">Nuclease activity is regulated by Rad50.</text>
</comment>
<comment type="subunit">
    <text evidence="1">Homodimer. Forms a heterotetramer composed of two Mre11 subunits and two Rad50 subunits.</text>
</comment>
<comment type="similarity">
    <text evidence="1">Belongs to the MRE11/RAD32 family.</text>
</comment>
<protein>
    <recommendedName>
        <fullName evidence="1">DNA double-strand break repair protein Mre11</fullName>
        <ecNumber evidence="1">3.1.-.-</ecNumber>
    </recommendedName>
</protein>
<keyword id="KW-0227">DNA damage</keyword>
<keyword id="KW-0234">DNA repair</keyword>
<keyword id="KW-0255">Endonuclease</keyword>
<keyword id="KW-0269">Exonuclease</keyword>
<keyword id="KW-0378">Hydrolase</keyword>
<keyword id="KW-0464">Manganese</keyword>
<keyword id="KW-0479">Metal-binding</keyword>
<keyword id="KW-0540">Nuclease</keyword>
<organism>
    <name type="scientific">Methanosarcina mazei (strain ATCC BAA-159 / DSM 3647 / Goe1 / Go1 / JCM 11833 / OCM 88)</name>
    <name type="common">Methanosarcina frisia</name>
    <dbReference type="NCBI Taxonomy" id="192952"/>
    <lineage>
        <taxon>Archaea</taxon>
        <taxon>Methanobacteriati</taxon>
        <taxon>Methanobacteriota</taxon>
        <taxon>Stenosarchaea group</taxon>
        <taxon>Methanomicrobia</taxon>
        <taxon>Methanosarcinales</taxon>
        <taxon>Methanosarcinaceae</taxon>
        <taxon>Methanosarcina</taxon>
    </lineage>
</organism>